<gene>
    <name type="primary">Crx</name>
</gene>
<sequence length="299" mass="32374">MMAYMNPGPHYSVNALALSGPNVDLMHQAVPYSSAPRKQRRERTTFTRSQLEELEALFAKTQYPDVYAREEVALKINLPESRVQVWFKNRRAKCRQQRQQQKQQQQPPGAQTKARPAKRKAGTSPRPSTDVCTDPLGISDSYSPSLPGPSGSPTTAVATVSIWSPASEAPLPEAQRAGLVASGPSLTSAPYAMTYAPASAFCSSPSAYASPSSYFSGLDPYLSPMVPQLGGPALSPLSGPSVGPSLAQSPTSLSGQSYSTYSPVDSLEFKDPTGTWKFTYNPMDPLDYKDQSAWKFQIL</sequence>
<reference key="1">
    <citation type="journal article" date="1997" name="Cell">
        <title>Crx, a novel otx-like homeobox gene, shows photoreceptor-specific expression and regulates photoreceptor differentiation.</title>
        <authorList>
            <person name="Furukawa T."/>
            <person name="Morrow E.M."/>
            <person name="Cepko C.L."/>
        </authorList>
    </citation>
    <scope>NUCLEOTIDE SEQUENCE [MRNA]</scope>
    <source>
        <tissue>Retina</tissue>
    </source>
</reference>
<reference key="2">
    <citation type="journal article" date="2004" name="Genome Res.">
        <title>The status, quality, and expansion of the NIH full-length cDNA project: the Mammalian Gene Collection (MGC).</title>
        <authorList>
            <consortium name="The MGC Project Team"/>
        </authorList>
    </citation>
    <scope>NUCLEOTIDE SEQUENCE [LARGE SCALE MRNA]</scope>
    <source>
        <tissue>Eye</tissue>
    </source>
</reference>
<reference key="3">
    <citation type="journal article" date="2006" name="Mol. Endocrinol.">
        <title>Activation of the blue opsin gene in cone photoreceptor development by retinoid-related orphan receptor beta.</title>
        <authorList>
            <person name="Srinivas M."/>
            <person name="Ng L."/>
            <person name="Liu H."/>
            <person name="Jia L."/>
            <person name="Forrest D."/>
        </authorList>
    </citation>
    <scope>FUNCTION AS TRANSCRIPTION ACTIVATOR</scope>
    <scope>SUBCELLULAR LOCATION</scope>
    <scope>DNA-BINDING</scope>
    <scope>INTERACTION WITH NRL AND RORB</scope>
    <scope>DEVELOPMENTAL STAGE</scope>
    <scope>TISSUE SPECIFICITY</scope>
    <source>
        <strain>C57BL/6J</strain>
        <tissue>Embryonic eye</tissue>
    </source>
</reference>
<feature type="chain" id="PRO_0000048863" description="Cone-rod homeobox protein">
    <location>
        <begin position="1"/>
        <end position="299"/>
    </location>
</feature>
<feature type="DNA-binding region" description="Homeobox" evidence="1">
    <location>
        <begin position="39"/>
        <end position="98"/>
    </location>
</feature>
<feature type="region of interest" description="Disordered" evidence="2">
    <location>
        <begin position="94"/>
        <end position="155"/>
    </location>
</feature>
<feature type="region of interest" description="Disordered" evidence="2">
    <location>
        <begin position="236"/>
        <end position="258"/>
    </location>
</feature>
<feature type="compositionally biased region" description="Low complexity" evidence="2">
    <location>
        <begin position="97"/>
        <end position="106"/>
    </location>
</feature>
<feature type="compositionally biased region" description="Low complexity" evidence="2">
    <location>
        <begin position="139"/>
        <end position="153"/>
    </location>
</feature>
<feature type="compositionally biased region" description="Low complexity" evidence="2">
    <location>
        <begin position="236"/>
        <end position="247"/>
    </location>
</feature>
<feature type="compositionally biased region" description="Polar residues" evidence="2">
    <location>
        <begin position="248"/>
        <end position="258"/>
    </location>
</feature>
<accession>O54751</accession>
<protein>
    <recommendedName>
        <fullName>Cone-rod homeobox protein</fullName>
    </recommendedName>
</protein>
<dbReference type="EMBL" id="U77615">
    <property type="protein sequence ID" value="AAB88585.1"/>
    <property type="molecule type" value="mRNA"/>
</dbReference>
<dbReference type="EMBL" id="BC016502">
    <property type="protein sequence ID" value="AAH16502.1"/>
    <property type="molecule type" value="mRNA"/>
</dbReference>
<dbReference type="CCDS" id="CCDS20840.1"/>
<dbReference type="RefSeq" id="NP_001106801.1">
    <property type="nucleotide sequence ID" value="NM_001113330.1"/>
</dbReference>
<dbReference type="RefSeq" id="NP_031796.1">
    <property type="nucleotide sequence ID" value="NM_007770.4"/>
</dbReference>
<dbReference type="SMR" id="O54751"/>
<dbReference type="BioGRID" id="198905">
    <property type="interactions" value="3"/>
</dbReference>
<dbReference type="FunCoup" id="O54751">
    <property type="interactions" value="162"/>
</dbReference>
<dbReference type="STRING" id="10090.ENSMUSP00000134400"/>
<dbReference type="PhosphoSitePlus" id="O54751"/>
<dbReference type="PaxDb" id="10090-ENSMUSP00000134400"/>
<dbReference type="ProteomicsDB" id="285336"/>
<dbReference type="Antibodypedia" id="31635">
    <property type="antibodies" value="260 antibodies from 32 providers"/>
</dbReference>
<dbReference type="DNASU" id="12951"/>
<dbReference type="Ensembl" id="ENSMUST00000044434.13">
    <property type="protein sequence ID" value="ENSMUSP00000043436.7"/>
    <property type="gene ID" value="ENSMUSG00000041578.16"/>
</dbReference>
<dbReference type="GeneID" id="12951"/>
<dbReference type="KEGG" id="mmu:12951"/>
<dbReference type="UCSC" id="uc009fgm.2">
    <property type="organism name" value="mouse"/>
</dbReference>
<dbReference type="AGR" id="MGI:1194883"/>
<dbReference type="CTD" id="1406"/>
<dbReference type="MGI" id="MGI:1194883">
    <property type="gene designation" value="Crx"/>
</dbReference>
<dbReference type="VEuPathDB" id="HostDB:ENSMUSG00000041578"/>
<dbReference type="eggNOG" id="KOG2251">
    <property type="taxonomic scope" value="Eukaryota"/>
</dbReference>
<dbReference type="GeneTree" id="ENSGT00940000161634"/>
<dbReference type="HOGENOM" id="CLU_064370_0_0_1"/>
<dbReference type="InParanoid" id="O54751"/>
<dbReference type="OMA" id="TWKFAYN"/>
<dbReference type="OrthoDB" id="6159439at2759"/>
<dbReference type="PhylomeDB" id="O54751"/>
<dbReference type="TreeFam" id="TF351179"/>
<dbReference type="BioGRID-ORCS" id="12951">
    <property type="hits" value="3 hits in 83 CRISPR screens"/>
</dbReference>
<dbReference type="ChiTaRS" id="Crx">
    <property type="organism name" value="mouse"/>
</dbReference>
<dbReference type="PRO" id="PR:O54751"/>
<dbReference type="Proteomes" id="UP000000589">
    <property type="component" value="Chromosome 7"/>
</dbReference>
<dbReference type="RNAct" id="O54751">
    <property type="molecule type" value="protein"/>
</dbReference>
<dbReference type="Bgee" id="ENSMUSG00000041578">
    <property type="expression patterns" value="Expressed in retinal neural layer and 25 other cell types or tissues"/>
</dbReference>
<dbReference type="ExpressionAtlas" id="O54751">
    <property type="expression patterns" value="baseline and differential"/>
</dbReference>
<dbReference type="GO" id="GO:0000785">
    <property type="term" value="C:chromatin"/>
    <property type="evidence" value="ECO:0000250"/>
    <property type="project" value="ARUK-UCL"/>
</dbReference>
<dbReference type="GO" id="GO:0005634">
    <property type="term" value="C:nucleus"/>
    <property type="evidence" value="ECO:0000314"/>
    <property type="project" value="UniProtKB"/>
</dbReference>
<dbReference type="GO" id="GO:0090575">
    <property type="term" value="C:RNA polymerase II transcription regulator complex"/>
    <property type="evidence" value="ECO:0000250"/>
    <property type="project" value="ARUK-UCL"/>
</dbReference>
<dbReference type="GO" id="GO:0005667">
    <property type="term" value="C:transcription regulator complex"/>
    <property type="evidence" value="ECO:0000314"/>
    <property type="project" value="MGI"/>
</dbReference>
<dbReference type="GO" id="GO:0003682">
    <property type="term" value="F:chromatin binding"/>
    <property type="evidence" value="ECO:0000314"/>
    <property type="project" value="MGI"/>
</dbReference>
<dbReference type="GO" id="GO:0001216">
    <property type="term" value="F:DNA-binding transcription activator activity"/>
    <property type="evidence" value="ECO:0000250"/>
    <property type="project" value="ARUK-UCL"/>
</dbReference>
<dbReference type="GO" id="GO:0001228">
    <property type="term" value="F:DNA-binding transcription activator activity, RNA polymerase II-specific"/>
    <property type="evidence" value="ECO:0007669"/>
    <property type="project" value="Ensembl"/>
</dbReference>
<dbReference type="GO" id="GO:0003700">
    <property type="term" value="F:DNA-binding transcription factor activity"/>
    <property type="evidence" value="ECO:0000314"/>
    <property type="project" value="UniProtKB"/>
</dbReference>
<dbReference type="GO" id="GO:0043522">
    <property type="term" value="F:leucine zipper domain binding"/>
    <property type="evidence" value="ECO:0007669"/>
    <property type="project" value="Ensembl"/>
</dbReference>
<dbReference type="GO" id="GO:0016922">
    <property type="term" value="F:nuclear receptor binding"/>
    <property type="evidence" value="ECO:0000353"/>
    <property type="project" value="UniProtKB"/>
</dbReference>
<dbReference type="GO" id="GO:0000978">
    <property type="term" value="F:RNA polymerase II cis-regulatory region sequence-specific DNA binding"/>
    <property type="evidence" value="ECO:0007669"/>
    <property type="project" value="Ensembl"/>
</dbReference>
<dbReference type="GO" id="GO:0000977">
    <property type="term" value="F:RNA polymerase II transcription regulatory region sequence-specific DNA binding"/>
    <property type="evidence" value="ECO:0000314"/>
    <property type="project" value="MGI"/>
</dbReference>
<dbReference type="GO" id="GO:0061629">
    <property type="term" value="F:RNA polymerase II-specific DNA-binding transcription factor binding"/>
    <property type="evidence" value="ECO:0000250"/>
    <property type="project" value="ARUK-UCL"/>
</dbReference>
<dbReference type="GO" id="GO:0030154">
    <property type="term" value="P:cell differentiation"/>
    <property type="evidence" value="ECO:0007669"/>
    <property type="project" value="UniProtKB-KW"/>
</dbReference>
<dbReference type="GO" id="GO:0007623">
    <property type="term" value="P:circadian rhythm"/>
    <property type="evidence" value="ECO:0007669"/>
    <property type="project" value="Ensembl"/>
</dbReference>
<dbReference type="GO" id="GO:0007399">
    <property type="term" value="P:nervous system development"/>
    <property type="evidence" value="ECO:0007669"/>
    <property type="project" value="UniProtKB-KW"/>
</dbReference>
<dbReference type="GO" id="GO:0046534">
    <property type="term" value="P:positive regulation of photoreceptor cell differentiation"/>
    <property type="evidence" value="ECO:0007669"/>
    <property type="project" value="Ensembl"/>
</dbReference>
<dbReference type="GO" id="GO:0045944">
    <property type="term" value="P:positive regulation of transcription by RNA polymerase II"/>
    <property type="evidence" value="ECO:0000314"/>
    <property type="project" value="MGI"/>
</dbReference>
<dbReference type="GO" id="GO:0006355">
    <property type="term" value="P:regulation of DNA-templated transcription"/>
    <property type="evidence" value="ECO:0000314"/>
    <property type="project" value="UniProtKB"/>
</dbReference>
<dbReference type="GO" id="GO:0060041">
    <property type="term" value="P:retina development in camera-type eye"/>
    <property type="evidence" value="ECO:0000315"/>
    <property type="project" value="MGI"/>
</dbReference>
<dbReference type="GO" id="GO:0007601">
    <property type="term" value="P:visual perception"/>
    <property type="evidence" value="ECO:0007669"/>
    <property type="project" value="UniProtKB-KW"/>
</dbReference>
<dbReference type="CDD" id="cd00086">
    <property type="entry name" value="homeodomain"/>
    <property type="match status" value="1"/>
</dbReference>
<dbReference type="FunFam" id="1.10.10.60:FF:000068">
    <property type="entry name" value="Orthodenticle homeobox 1"/>
    <property type="match status" value="1"/>
</dbReference>
<dbReference type="Gene3D" id="1.10.10.60">
    <property type="entry name" value="Homeodomain-like"/>
    <property type="match status" value="1"/>
</dbReference>
<dbReference type="InterPro" id="IPR001356">
    <property type="entry name" value="HD"/>
</dbReference>
<dbReference type="InterPro" id="IPR017970">
    <property type="entry name" value="Homeobox_CS"/>
</dbReference>
<dbReference type="InterPro" id="IPR009057">
    <property type="entry name" value="Homeodomain-like_sf"/>
</dbReference>
<dbReference type="InterPro" id="IPR013851">
    <property type="entry name" value="Otx_TF_C"/>
</dbReference>
<dbReference type="PANTHER" id="PTHR45793:SF22">
    <property type="entry name" value="CONE-ROD HOMEOBOX PROTEIN"/>
    <property type="match status" value="1"/>
</dbReference>
<dbReference type="PANTHER" id="PTHR45793">
    <property type="entry name" value="HOMEOBOX PROTEIN"/>
    <property type="match status" value="1"/>
</dbReference>
<dbReference type="Pfam" id="PF00046">
    <property type="entry name" value="Homeodomain"/>
    <property type="match status" value="1"/>
</dbReference>
<dbReference type="Pfam" id="PF03529">
    <property type="entry name" value="TF_Otx"/>
    <property type="match status" value="1"/>
</dbReference>
<dbReference type="SMART" id="SM00389">
    <property type="entry name" value="HOX"/>
    <property type="match status" value="1"/>
</dbReference>
<dbReference type="SUPFAM" id="SSF46689">
    <property type="entry name" value="Homeodomain-like"/>
    <property type="match status" value="1"/>
</dbReference>
<dbReference type="PROSITE" id="PS00027">
    <property type="entry name" value="HOMEOBOX_1"/>
    <property type="match status" value="1"/>
</dbReference>
<dbReference type="PROSITE" id="PS50071">
    <property type="entry name" value="HOMEOBOX_2"/>
    <property type="match status" value="1"/>
</dbReference>
<organism>
    <name type="scientific">Mus musculus</name>
    <name type="common">Mouse</name>
    <dbReference type="NCBI Taxonomy" id="10090"/>
    <lineage>
        <taxon>Eukaryota</taxon>
        <taxon>Metazoa</taxon>
        <taxon>Chordata</taxon>
        <taxon>Craniata</taxon>
        <taxon>Vertebrata</taxon>
        <taxon>Euteleostomi</taxon>
        <taxon>Mammalia</taxon>
        <taxon>Eutheria</taxon>
        <taxon>Euarchontoglires</taxon>
        <taxon>Glires</taxon>
        <taxon>Rodentia</taxon>
        <taxon>Myomorpha</taxon>
        <taxon>Muroidea</taxon>
        <taxon>Muridae</taxon>
        <taxon>Murinae</taxon>
        <taxon>Mus</taxon>
        <taxon>Mus</taxon>
    </lineage>
</organism>
<name>CRX_MOUSE</name>
<comment type="function">
    <text evidence="3">Transcription factor that binds and transactivates the sequence 5'-TAATC[CA]-3' which is found upstream of several photoreceptor-specific genes, including the opsin genes. Acts synergistically with other transcription factors, such as NRL, RORB and RAX, to regulate photoreceptor cell-specific gene transcription. Essential for the maintenance of mammalian photoreceptors.</text>
</comment>
<comment type="subunit">
    <text evidence="3">Interacts (via the homeobox) with NRL (via the leucine-zipper domain). Interacts with PDC, RAX2, RORB and SCA7.</text>
</comment>
<comment type="subcellular location">
    <subcellularLocation>
        <location evidence="1 3">Nucleus</location>
    </subcellularLocation>
</comment>
<comment type="tissue specificity">
    <text evidence="3">Retina.</text>
</comment>
<comment type="developmental stage">
    <text evidence="3">At 17.5 dpc, expressed in a narrow zone in the peripheral outer nuclear layer of the retina. At P12, expressed over the entire photoreceptor layer.</text>
</comment>
<comment type="similarity">
    <text evidence="4">Belongs to the paired homeobox family.</text>
</comment>
<proteinExistence type="evidence at protein level"/>
<evidence type="ECO:0000255" key="1">
    <source>
        <dbReference type="PROSITE-ProRule" id="PRU00108"/>
    </source>
</evidence>
<evidence type="ECO:0000256" key="2">
    <source>
        <dbReference type="SAM" id="MobiDB-lite"/>
    </source>
</evidence>
<evidence type="ECO:0000269" key="3">
    <source>
    </source>
</evidence>
<evidence type="ECO:0000305" key="4"/>
<keyword id="KW-0010">Activator</keyword>
<keyword id="KW-0217">Developmental protein</keyword>
<keyword id="KW-0221">Differentiation</keyword>
<keyword id="KW-0238">DNA-binding</keyword>
<keyword id="KW-0371">Homeobox</keyword>
<keyword id="KW-0524">Neurogenesis</keyword>
<keyword id="KW-0539">Nucleus</keyword>
<keyword id="KW-1185">Reference proteome</keyword>
<keyword id="KW-0716">Sensory transduction</keyword>
<keyword id="KW-0804">Transcription</keyword>
<keyword id="KW-0805">Transcription regulation</keyword>
<keyword id="KW-0844">Vision</keyword>